<protein>
    <recommendedName>
        <fullName evidence="1">tRNA(Met) cytidine acetate ligase</fullName>
        <ecNumber evidence="1">6.3.4.-</ecNumber>
    </recommendedName>
</protein>
<sequence length="369" mass="41710">MTVTGIVAEFNPFHNGHKYLLEQAQGIKVIAMSGNFMQRGEPAIVDKWTRSQMALENGADLVIELPFLVSVQSADYFASGAVSILARLGVDNLCFGTEEMLDYARIGDIYVNKKEEMEAFLKKQSDSLSYPQKMQAMWQEFAGITFSGQTPNHILGLAYTKAASQNGIRLNPIQRQGAGYHSSEKTEIFASATSLRKHQSDRFFVEKGMPNSDLFLNSPQVVWQDYFSLLKYQIMTHSDLTQIYQVNEEIANRIKSQIRYVETVDELVDKVATKRYTKARIRRLLTYILINAVESPIPNAIHVLGFTQKGQQHLKSVKKSVDIVTRIGSQTWDSLTQRADSVYQMGNANIAEQTWGRIPFYQPVSQSDL</sequence>
<feature type="chain" id="PRO_0000300192" description="tRNA(Met) cytidine acetate ligase">
    <location>
        <begin position="1"/>
        <end position="369"/>
    </location>
</feature>
<feature type="binding site" evidence="1">
    <location>
        <begin position="7"/>
        <end position="20"/>
    </location>
    <ligand>
        <name>ATP</name>
        <dbReference type="ChEBI" id="CHEBI:30616"/>
    </ligand>
</feature>
<feature type="binding site" evidence="1">
    <location>
        <position position="96"/>
    </location>
    <ligand>
        <name>ATP</name>
        <dbReference type="ChEBI" id="CHEBI:30616"/>
    </ligand>
</feature>
<feature type="binding site" evidence="1">
    <location>
        <position position="152"/>
    </location>
    <ligand>
        <name>ATP</name>
        <dbReference type="ChEBI" id="CHEBI:30616"/>
    </ligand>
</feature>
<feature type="binding site" evidence="1">
    <location>
        <position position="175"/>
    </location>
    <ligand>
        <name>ATP</name>
        <dbReference type="ChEBI" id="CHEBI:30616"/>
    </ligand>
</feature>
<organism>
    <name type="scientific">Streptococcus agalactiae serotype Ia (strain ATCC 27591 / A909 / CDC SS700)</name>
    <dbReference type="NCBI Taxonomy" id="205921"/>
    <lineage>
        <taxon>Bacteria</taxon>
        <taxon>Bacillati</taxon>
        <taxon>Bacillota</taxon>
        <taxon>Bacilli</taxon>
        <taxon>Lactobacillales</taxon>
        <taxon>Streptococcaceae</taxon>
        <taxon>Streptococcus</taxon>
    </lineage>
</organism>
<name>TMCAL_STRA1</name>
<reference key="1">
    <citation type="journal article" date="2005" name="Proc. Natl. Acad. Sci. U.S.A.">
        <title>Genome analysis of multiple pathogenic isolates of Streptococcus agalactiae: implications for the microbial 'pan-genome'.</title>
        <authorList>
            <person name="Tettelin H."/>
            <person name="Masignani V."/>
            <person name="Cieslewicz M.J."/>
            <person name="Donati C."/>
            <person name="Medini D."/>
            <person name="Ward N.L."/>
            <person name="Angiuoli S.V."/>
            <person name="Crabtree J."/>
            <person name="Jones A.L."/>
            <person name="Durkin A.S."/>
            <person name="DeBoy R.T."/>
            <person name="Davidsen T.M."/>
            <person name="Mora M."/>
            <person name="Scarselli M."/>
            <person name="Margarit y Ros I."/>
            <person name="Peterson J.D."/>
            <person name="Hauser C.R."/>
            <person name="Sundaram J.P."/>
            <person name="Nelson W.C."/>
            <person name="Madupu R."/>
            <person name="Brinkac L.M."/>
            <person name="Dodson R.J."/>
            <person name="Rosovitz M.J."/>
            <person name="Sullivan S.A."/>
            <person name="Daugherty S.C."/>
            <person name="Haft D.H."/>
            <person name="Selengut J."/>
            <person name="Gwinn M.L."/>
            <person name="Zhou L."/>
            <person name="Zafar N."/>
            <person name="Khouri H."/>
            <person name="Radune D."/>
            <person name="Dimitrov G."/>
            <person name="Watkins K."/>
            <person name="O'Connor K.J."/>
            <person name="Smith S."/>
            <person name="Utterback T.R."/>
            <person name="White O."/>
            <person name="Rubens C.E."/>
            <person name="Grandi G."/>
            <person name="Madoff L.C."/>
            <person name="Kasper D.L."/>
            <person name="Telford J.L."/>
            <person name="Wessels M.R."/>
            <person name="Rappuoli R."/>
            <person name="Fraser C.M."/>
        </authorList>
    </citation>
    <scope>NUCLEOTIDE SEQUENCE [LARGE SCALE GENOMIC DNA]</scope>
    <source>
        <strain>ATCC 27591 / A909 / CDC SS700</strain>
    </source>
</reference>
<comment type="function">
    <text evidence="1">Catalyzes the formation of N(4)-acetylcytidine (ac(4)C) at the wobble position of elongator tRNA(Met), using acetate and ATP as substrates. First activates an acetate ion to form acetyladenylate (Ac-AMP) and then transfers the acetyl group to tRNA to form ac(4)C34.</text>
</comment>
<comment type="catalytic activity">
    <reaction evidence="1">
        <text>cytidine(34) in elongator tRNA(Met) + acetate + ATP = N(4)-acetylcytidine(34) in elongator tRNA(Met) + AMP + diphosphate</text>
        <dbReference type="Rhea" id="RHEA:58144"/>
        <dbReference type="Rhea" id="RHEA-COMP:10693"/>
        <dbReference type="Rhea" id="RHEA-COMP:10694"/>
        <dbReference type="ChEBI" id="CHEBI:30089"/>
        <dbReference type="ChEBI" id="CHEBI:30616"/>
        <dbReference type="ChEBI" id="CHEBI:33019"/>
        <dbReference type="ChEBI" id="CHEBI:74900"/>
        <dbReference type="ChEBI" id="CHEBI:82748"/>
        <dbReference type="ChEBI" id="CHEBI:456215"/>
    </reaction>
</comment>
<comment type="subcellular location">
    <subcellularLocation>
        <location evidence="1">Cytoplasm</location>
    </subcellularLocation>
</comment>
<comment type="similarity">
    <text evidence="1">Belongs to the TmcAL family.</text>
</comment>
<proteinExistence type="inferred from homology"/>
<keyword id="KW-0067">ATP-binding</keyword>
<keyword id="KW-0963">Cytoplasm</keyword>
<keyword id="KW-0436">Ligase</keyword>
<keyword id="KW-0547">Nucleotide-binding</keyword>
<keyword id="KW-0694">RNA-binding</keyword>
<keyword id="KW-0819">tRNA processing</keyword>
<keyword id="KW-0820">tRNA-binding</keyword>
<accession>Q3JZN3</accession>
<dbReference type="EC" id="6.3.4.-" evidence="1"/>
<dbReference type="EMBL" id="CP000114">
    <property type="protein sequence ID" value="ABA45943.1"/>
    <property type="molecule type" value="Genomic_DNA"/>
</dbReference>
<dbReference type="RefSeq" id="WP_000218985.1">
    <property type="nucleotide sequence ID" value="NC_007432.1"/>
</dbReference>
<dbReference type="SMR" id="Q3JZN3"/>
<dbReference type="KEGG" id="sak:SAK_1668"/>
<dbReference type="HOGENOM" id="CLU_038915_0_2_9"/>
<dbReference type="GO" id="GO:0005737">
    <property type="term" value="C:cytoplasm"/>
    <property type="evidence" value="ECO:0007669"/>
    <property type="project" value="UniProtKB-SubCell"/>
</dbReference>
<dbReference type="GO" id="GO:0005524">
    <property type="term" value="F:ATP binding"/>
    <property type="evidence" value="ECO:0007669"/>
    <property type="project" value="UniProtKB-KW"/>
</dbReference>
<dbReference type="GO" id="GO:0016879">
    <property type="term" value="F:ligase activity, forming carbon-nitrogen bonds"/>
    <property type="evidence" value="ECO:0007669"/>
    <property type="project" value="UniProtKB-UniRule"/>
</dbReference>
<dbReference type="GO" id="GO:0000049">
    <property type="term" value="F:tRNA binding"/>
    <property type="evidence" value="ECO:0007669"/>
    <property type="project" value="UniProtKB-KW"/>
</dbReference>
<dbReference type="GO" id="GO:0006400">
    <property type="term" value="P:tRNA modification"/>
    <property type="evidence" value="ECO:0007669"/>
    <property type="project" value="UniProtKB-UniRule"/>
</dbReference>
<dbReference type="Gene3D" id="3.40.50.620">
    <property type="entry name" value="HUPs"/>
    <property type="match status" value="1"/>
</dbReference>
<dbReference type="HAMAP" id="MF_01539">
    <property type="entry name" value="TmcAL"/>
    <property type="match status" value="1"/>
</dbReference>
<dbReference type="InterPro" id="IPR014729">
    <property type="entry name" value="Rossmann-like_a/b/a_fold"/>
</dbReference>
<dbReference type="InterPro" id="IPR008513">
    <property type="entry name" value="tRNA(Met)_cyd_acetate_ligase"/>
</dbReference>
<dbReference type="NCBIfam" id="NF010191">
    <property type="entry name" value="PRK13670.1"/>
    <property type="match status" value="1"/>
</dbReference>
<dbReference type="PANTHER" id="PTHR37825">
    <property type="entry name" value="TRNA(MET) CYTIDINE ACETATE LIGASE"/>
    <property type="match status" value="1"/>
</dbReference>
<dbReference type="PANTHER" id="PTHR37825:SF1">
    <property type="entry name" value="TRNA(MET) CYTIDINE ACETATE LIGASE"/>
    <property type="match status" value="1"/>
</dbReference>
<dbReference type="Pfam" id="PF05636">
    <property type="entry name" value="HIGH_NTase1"/>
    <property type="match status" value="1"/>
</dbReference>
<dbReference type="SUPFAM" id="SSF52374">
    <property type="entry name" value="Nucleotidylyl transferase"/>
    <property type="match status" value="1"/>
</dbReference>
<gene>
    <name evidence="1" type="primary">tmcAL</name>
    <name type="ordered locus">SAK_1668</name>
</gene>
<evidence type="ECO:0000255" key="1">
    <source>
        <dbReference type="HAMAP-Rule" id="MF_01539"/>
    </source>
</evidence>